<dbReference type="EMBL" id="D17510">
    <property type="protein sequence ID" value="BAA04403.1"/>
    <property type="molecule type" value="Genomic_DNA"/>
</dbReference>
<dbReference type="PIR" id="T07526">
    <property type="entry name" value="T07526"/>
</dbReference>
<dbReference type="RefSeq" id="NP_042447.1">
    <property type="nucleotide sequence ID" value="NC_001631.1"/>
</dbReference>
<dbReference type="SMR" id="P41635"/>
<dbReference type="GeneID" id="809034"/>
<dbReference type="GO" id="GO:0009507">
    <property type="term" value="C:chloroplast"/>
    <property type="evidence" value="ECO:0007669"/>
    <property type="project" value="UniProtKB-SubCell"/>
</dbReference>
<dbReference type="GO" id="GO:0022627">
    <property type="term" value="C:cytosolic small ribosomal subunit"/>
    <property type="evidence" value="ECO:0007669"/>
    <property type="project" value="TreeGrafter"/>
</dbReference>
<dbReference type="GO" id="GO:0019843">
    <property type="term" value="F:rRNA binding"/>
    <property type="evidence" value="ECO:0007669"/>
    <property type="project" value="UniProtKB-UniRule"/>
</dbReference>
<dbReference type="GO" id="GO:0003735">
    <property type="term" value="F:structural constituent of ribosome"/>
    <property type="evidence" value="ECO:0007669"/>
    <property type="project" value="InterPro"/>
</dbReference>
<dbReference type="GO" id="GO:0006412">
    <property type="term" value="P:translation"/>
    <property type="evidence" value="ECO:0007669"/>
    <property type="project" value="UniProtKB-UniRule"/>
</dbReference>
<dbReference type="CDD" id="cd02412">
    <property type="entry name" value="KH-II_30S_S3"/>
    <property type="match status" value="1"/>
</dbReference>
<dbReference type="Gene3D" id="3.30.300.20">
    <property type="match status" value="1"/>
</dbReference>
<dbReference type="Gene3D" id="3.30.1140.32">
    <property type="entry name" value="Ribosomal protein S3, C-terminal domain"/>
    <property type="match status" value="1"/>
</dbReference>
<dbReference type="HAMAP" id="MF_01309_B">
    <property type="entry name" value="Ribosomal_uS3_B"/>
    <property type="match status" value="1"/>
</dbReference>
<dbReference type="InterPro" id="IPR015946">
    <property type="entry name" value="KH_dom-like_a/b"/>
</dbReference>
<dbReference type="InterPro" id="IPR004044">
    <property type="entry name" value="KH_dom_type_2"/>
</dbReference>
<dbReference type="InterPro" id="IPR009019">
    <property type="entry name" value="KH_sf_prok-type"/>
</dbReference>
<dbReference type="InterPro" id="IPR036419">
    <property type="entry name" value="Ribosomal_S3_C_sf"/>
</dbReference>
<dbReference type="InterPro" id="IPR005704">
    <property type="entry name" value="Ribosomal_uS3_bac-typ"/>
</dbReference>
<dbReference type="InterPro" id="IPR001351">
    <property type="entry name" value="Ribosomal_uS3_C"/>
</dbReference>
<dbReference type="InterPro" id="IPR018280">
    <property type="entry name" value="Ribosomal_uS3_CS"/>
</dbReference>
<dbReference type="NCBIfam" id="TIGR01009">
    <property type="entry name" value="rpsC_bact"/>
    <property type="match status" value="1"/>
</dbReference>
<dbReference type="PANTHER" id="PTHR11760">
    <property type="entry name" value="30S/40S RIBOSOMAL PROTEIN S3"/>
    <property type="match status" value="1"/>
</dbReference>
<dbReference type="PANTHER" id="PTHR11760:SF19">
    <property type="entry name" value="SMALL RIBOSOMAL SUBUNIT PROTEIN US3C"/>
    <property type="match status" value="1"/>
</dbReference>
<dbReference type="Pfam" id="PF00189">
    <property type="entry name" value="Ribosomal_S3_C"/>
    <property type="match status" value="1"/>
</dbReference>
<dbReference type="SUPFAM" id="SSF54814">
    <property type="entry name" value="Prokaryotic type KH domain (KH-domain type II)"/>
    <property type="match status" value="1"/>
</dbReference>
<dbReference type="SUPFAM" id="SSF54821">
    <property type="entry name" value="Ribosomal protein S3 C-terminal domain"/>
    <property type="match status" value="1"/>
</dbReference>
<dbReference type="PROSITE" id="PS50823">
    <property type="entry name" value="KH_TYPE_2"/>
    <property type="match status" value="1"/>
</dbReference>
<dbReference type="PROSITE" id="PS00548">
    <property type="entry name" value="RIBOSOMAL_S3"/>
    <property type="match status" value="1"/>
</dbReference>
<evidence type="ECO:0000250" key="1"/>
<evidence type="ECO:0000305" key="2"/>
<geneLocation type="chloroplast"/>
<feature type="chain" id="PRO_0000130301" description="Small ribosomal subunit protein uS3c">
    <location>
        <begin position="1"/>
        <end position="217"/>
    </location>
</feature>
<feature type="domain" description="KH type-2">
    <location>
        <begin position="47"/>
        <end position="119"/>
    </location>
</feature>
<keyword id="KW-0150">Chloroplast</keyword>
<keyword id="KW-0934">Plastid</keyword>
<keyword id="KW-0687">Ribonucleoprotein</keyword>
<keyword id="KW-0689">Ribosomal protein</keyword>
<keyword id="KW-0694">RNA-binding</keyword>
<keyword id="KW-0699">rRNA-binding</keyword>
<name>RR3_PINTH</name>
<proteinExistence type="inferred from homology"/>
<reference key="1">
    <citation type="journal article" date="1994" name="Proc. Natl. Acad. Sci. U.S.A.">
        <title>Loss of all ndh genes as determined by sequencing the entire chloroplast genome of the black pine Pinus thunbergii.</title>
        <authorList>
            <person name="Wakasugi T."/>
            <person name="Tsudzuki J."/>
            <person name="Ito S."/>
            <person name="Nakashima K."/>
            <person name="Tsudzuki T."/>
            <person name="Sugiura M."/>
        </authorList>
    </citation>
    <scope>NUCLEOTIDE SEQUENCE [LARGE SCALE GENOMIC DNA]</scope>
</reference>
<comment type="subunit">
    <text evidence="1">Part of the 30S ribosomal subunit.</text>
</comment>
<comment type="subcellular location">
    <subcellularLocation>
        <location>Plastid</location>
        <location>Chloroplast</location>
    </subcellularLocation>
</comment>
<comment type="similarity">
    <text evidence="2">Belongs to the universal ribosomal protein uS3 family.</text>
</comment>
<gene>
    <name type="primary">rps3</name>
</gene>
<sequence length="217" mass="25360">MAQKINPLGFRLGVTQNERSHWFAQQRNYSKDLREDQKIRTCIENYVRTHIKSSSNYGGIARVEIRRKIDLIKVKIYIGFPNLLLIEGRGQGIEKLRNDVLNMLDSVDRKLHIAIEKVAKPYRKPNILAEYIALQLEKRVPFRKTMKKAIELAEREEVEGIQIQIAGRLDGKEIARVEWDRGGRVPLQTIRARIDYCYYPVKTIYGVLGIKIWILEE</sequence>
<organism>
    <name type="scientific">Pinus thunbergii</name>
    <name type="common">Japanese black pine</name>
    <name type="synonym">Pinus thunbergiana</name>
    <dbReference type="NCBI Taxonomy" id="3350"/>
    <lineage>
        <taxon>Eukaryota</taxon>
        <taxon>Viridiplantae</taxon>
        <taxon>Streptophyta</taxon>
        <taxon>Embryophyta</taxon>
        <taxon>Tracheophyta</taxon>
        <taxon>Spermatophyta</taxon>
        <taxon>Pinopsida</taxon>
        <taxon>Pinidae</taxon>
        <taxon>Conifers I</taxon>
        <taxon>Pinales</taxon>
        <taxon>Pinaceae</taxon>
        <taxon>Pinus</taxon>
        <taxon>Pinus subgen. Pinus</taxon>
    </lineage>
</organism>
<protein>
    <recommendedName>
        <fullName evidence="2">Small ribosomal subunit protein uS3c</fullName>
    </recommendedName>
    <alternativeName>
        <fullName>30S ribosomal protein S3, chloroplastic</fullName>
    </alternativeName>
</protein>
<accession>P41635</accession>